<accession>P9WJT0</accession>
<accession>L0T944</accession>
<accession>P65378</accession>
<accession>Q10390</accession>
<protein>
    <recommendedName>
        <fullName>Probable transport accessory protein MmpS3</fullName>
    </recommendedName>
</protein>
<comment type="subcellular location">
    <subcellularLocation>
        <location evidence="3">Cell membrane</location>
        <topology evidence="1">Single-pass membrane protein</topology>
    </subcellularLocation>
</comment>
<comment type="similarity">
    <text evidence="3">Belongs to the MmpS family.</text>
</comment>
<reference key="1">
    <citation type="journal article" date="2002" name="J. Bacteriol.">
        <title>Whole-genome comparison of Mycobacterium tuberculosis clinical and laboratory strains.</title>
        <authorList>
            <person name="Fleischmann R.D."/>
            <person name="Alland D."/>
            <person name="Eisen J.A."/>
            <person name="Carpenter L."/>
            <person name="White O."/>
            <person name="Peterson J.D."/>
            <person name="DeBoy R.T."/>
            <person name="Dodson R.J."/>
            <person name="Gwinn M.L."/>
            <person name="Haft D.H."/>
            <person name="Hickey E.K."/>
            <person name="Kolonay J.F."/>
            <person name="Nelson W.C."/>
            <person name="Umayam L.A."/>
            <person name="Ermolaeva M.D."/>
            <person name="Salzberg S.L."/>
            <person name="Delcher A."/>
            <person name="Utterback T.R."/>
            <person name="Weidman J.F."/>
            <person name="Khouri H.M."/>
            <person name="Gill J."/>
            <person name="Mikula A."/>
            <person name="Bishai W."/>
            <person name="Jacobs W.R. Jr."/>
            <person name="Venter J.C."/>
            <person name="Fraser C.M."/>
        </authorList>
    </citation>
    <scope>NUCLEOTIDE SEQUENCE [LARGE SCALE GENOMIC DNA]</scope>
    <source>
        <strain>CDC 1551 / Oshkosh</strain>
    </source>
</reference>
<evidence type="ECO:0000255" key="1"/>
<evidence type="ECO:0000256" key="2">
    <source>
        <dbReference type="SAM" id="MobiDB-lite"/>
    </source>
</evidence>
<evidence type="ECO:0000305" key="3"/>
<feature type="chain" id="PRO_0000427776" description="Probable transport accessory protein MmpS3">
    <location>
        <begin position="1"/>
        <end position="299"/>
    </location>
</feature>
<feature type="transmembrane region" description="Helical" evidence="1">
    <location>
        <begin position="101"/>
        <end position="121"/>
    </location>
</feature>
<feature type="region of interest" description="Disordered" evidence="2">
    <location>
        <begin position="1"/>
        <end position="72"/>
    </location>
</feature>
<feature type="region of interest" description="Disordered" evidence="2">
    <location>
        <begin position="128"/>
        <end position="213"/>
    </location>
</feature>
<feature type="compositionally biased region" description="Polar residues" evidence="2">
    <location>
        <begin position="128"/>
        <end position="139"/>
    </location>
</feature>
<feature type="compositionally biased region" description="Pro residues" evidence="2">
    <location>
        <begin position="150"/>
        <end position="163"/>
    </location>
</feature>
<feature type="compositionally biased region" description="Low complexity" evidence="2">
    <location>
        <begin position="164"/>
        <end position="176"/>
    </location>
</feature>
<feature type="compositionally biased region" description="Pro residues" evidence="2">
    <location>
        <begin position="177"/>
        <end position="193"/>
    </location>
</feature>
<gene>
    <name type="primary">mmpS3</name>
    <name type="ordered locus">MT2254</name>
</gene>
<sequence length="299" mass="30955">MSGPNPPGREPDEPESEPVSDTGDERASGNHLPPVAGGGDKLPSDQTGETDAYSRAYSAPESEHVTGGPYVPADLRLYDYDDYEESSDLDDELAAPRWPWVVGVAAIIAAVALVVSVSLLVTRPHTSKLATGDTTSSAPPVQDEITTTKPAPPPPPPAPPPTTEIPTATETQTVTVTPPPPPPPATTTAPPPATTTTAAAPPPTTTTPTGPRQVTYSVTGTKAPGDIISVTYVDAAGRRRTQHNVYIPWSMTVTPISQSDVGSVEASSLFRVSKLNCSITTSDGTVLSSNSNDGPQTSC</sequence>
<name>MMPS3_MYCTO</name>
<proteinExistence type="inferred from homology"/>
<organism>
    <name type="scientific">Mycobacterium tuberculosis (strain CDC 1551 / Oshkosh)</name>
    <dbReference type="NCBI Taxonomy" id="83331"/>
    <lineage>
        <taxon>Bacteria</taxon>
        <taxon>Bacillati</taxon>
        <taxon>Actinomycetota</taxon>
        <taxon>Actinomycetes</taxon>
        <taxon>Mycobacteriales</taxon>
        <taxon>Mycobacteriaceae</taxon>
        <taxon>Mycobacterium</taxon>
        <taxon>Mycobacterium tuberculosis complex</taxon>
    </lineage>
</organism>
<keyword id="KW-1003">Cell membrane</keyword>
<keyword id="KW-0472">Membrane</keyword>
<keyword id="KW-1185">Reference proteome</keyword>
<keyword id="KW-0812">Transmembrane</keyword>
<keyword id="KW-1133">Transmembrane helix</keyword>
<dbReference type="EMBL" id="AE000516">
    <property type="protein sequence ID" value="AAK46540.1"/>
    <property type="molecule type" value="Genomic_DNA"/>
</dbReference>
<dbReference type="PIR" id="G70784">
    <property type="entry name" value="G70784"/>
</dbReference>
<dbReference type="RefSeq" id="WP_003411405.1">
    <property type="nucleotide sequence ID" value="NZ_KK341227.1"/>
</dbReference>
<dbReference type="SMR" id="P9WJT0"/>
<dbReference type="KEGG" id="mtc:MT2254"/>
<dbReference type="PATRIC" id="fig|83331.31.peg.2429"/>
<dbReference type="HOGENOM" id="CLU_089277_0_0_11"/>
<dbReference type="Proteomes" id="UP000001020">
    <property type="component" value="Chromosome"/>
</dbReference>
<dbReference type="GO" id="GO:0005886">
    <property type="term" value="C:plasma membrane"/>
    <property type="evidence" value="ECO:0007669"/>
    <property type="project" value="UniProtKB-SubCell"/>
</dbReference>
<dbReference type="FunFam" id="2.60.40.2880:FF:000001">
    <property type="entry name" value="Conserved membrane protein MmpS3"/>
    <property type="match status" value="1"/>
</dbReference>
<dbReference type="Gene3D" id="2.60.40.2880">
    <property type="entry name" value="MmpS1-5, C-terminal soluble domain"/>
    <property type="match status" value="1"/>
</dbReference>
<dbReference type="InterPro" id="IPR008693">
    <property type="entry name" value="MmpS"/>
</dbReference>
<dbReference type="InterPro" id="IPR038468">
    <property type="entry name" value="MmpS_C"/>
</dbReference>
<dbReference type="Pfam" id="PF05423">
    <property type="entry name" value="Mycobact_memb"/>
    <property type="match status" value="1"/>
</dbReference>